<keyword id="KW-0175">Coiled coil</keyword>
<keyword id="KW-0488">Methylation</keyword>
<keyword id="KW-0597">Phosphoprotein</keyword>
<keyword id="KW-1185">Reference proteome</keyword>
<comment type="subunit">
    <text evidence="1">Interacts with RAP2A.</text>
</comment>
<comment type="similarity">
    <text evidence="5">Belongs to the RUNDC3 family.</text>
</comment>
<organism>
    <name type="scientific">Mus musculus</name>
    <name type="common">Mouse</name>
    <dbReference type="NCBI Taxonomy" id="10090"/>
    <lineage>
        <taxon>Eukaryota</taxon>
        <taxon>Metazoa</taxon>
        <taxon>Chordata</taxon>
        <taxon>Craniata</taxon>
        <taxon>Vertebrata</taxon>
        <taxon>Euteleostomi</taxon>
        <taxon>Mammalia</taxon>
        <taxon>Eutheria</taxon>
        <taxon>Euarchontoglires</taxon>
        <taxon>Glires</taxon>
        <taxon>Rodentia</taxon>
        <taxon>Myomorpha</taxon>
        <taxon>Muroidea</taxon>
        <taxon>Muridae</taxon>
        <taxon>Murinae</taxon>
        <taxon>Mus</taxon>
        <taxon>Mus</taxon>
    </lineage>
</organism>
<gene>
    <name type="primary">Rundc3b</name>
    <name type="synonym">Gm440</name>
</gene>
<reference key="1">
    <citation type="journal article" date="2004" name="Genome Res.">
        <title>The status, quality, and expansion of the NIH full-length cDNA project: the Mammalian Gene Collection (MGC).</title>
        <authorList>
            <consortium name="The MGC Project Team"/>
        </authorList>
    </citation>
    <scope>NUCLEOTIDE SEQUENCE [LARGE SCALE MRNA]</scope>
    <source>
        <strain>C57BL/6J</strain>
        <tissue>Brain</tissue>
        <tissue>Eye</tissue>
    </source>
</reference>
<reference key="2">
    <citation type="journal article" date="2010" name="Cell">
        <title>A tissue-specific atlas of mouse protein phosphorylation and expression.</title>
        <authorList>
            <person name="Huttlin E.L."/>
            <person name="Jedrychowski M.P."/>
            <person name="Elias J.E."/>
            <person name="Goswami T."/>
            <person name="Rad R."/>
            <person name="Beausoleil S.A."/>
            <person name="Villen J."/>
            <person name="Haas W."/>
            <person name="Sowa M.E."/>
            <person name="Gygi S.P."/>
        </authorList>
    </citation>
    <scope>PHOSPHORYLATION [LARGE SCALE ANALYSIS] AT SER-216 AND SER-217</scope>
    <scope>IDENTIFICATION BY MASS SPECTROMETRY [LARGE SCALE ANALYSIS]</scope>
    <source>
        <tissue>Testis</tissue>
    </source>
</reference>
<reference key="3">
    <citation type="journal article" date="2014" name="Mol. Cell. Proteomics">
        <title>Immunoaffinity enrichment and mass spectrometry analysis of protein methylation.</title>
        <authorList>
            <person name="Guo A."/>
            <person name="Gu H."/>
            <person name="Zhou J."/>
            <person name="Mulhern D."/>
            <person name="Wang Y."/>
            <person name="Lee K.A."/>
            <person name="Yang V."/>
            <person name="Aguiar M."/>
            <person name="Kornhauser J."/>
            <person name="Jia X."/>
            <person name="Ren J."/>
            <person name="Beausoleil S.A."/>
            <person name="Silva J.C."/>
            <person name="Vemulapalli V."/>
            <person name="Bedford M.T."/>
            <person name="Comb M.J."/>
        </authorList>
    </citation>
    <scope>METHYLATION [LARGE SCALE ANALYSIS] AT ARG-13</scope>
    <scope>IDENTIFICATION BY MASS SPECTROMETRY [LARGE SCALE ANALYSIS]</scope>
    <source>
        <tissue>Brain</tissue>
    </source>
</reference>
<sequence length="408" mass="45138">MASRSLGGLSGSRGGGGGGGGKKSLSARNAAVERRNLITVCRFSVKTLIDRSCFETIDDSSPEFNNFAAVLEQILSHRLKGQVTWFGYESPRSFWDYIRVACRKVSQNCICSIENMENVSSSRAKGRAWIRVALMEKHLSEYISTALRDFKTTRRFYEDGAIVLGEEANMLAGMLLGLNAIDFSFCLKGEGLDGTFPAVIDYTPYLKFEQSSDSISSDEEELRTFGSSDSESSTPENVGPPLILDENTWFNKCKRVRQKYQLTLEQKGYLEELLRLRENQLSESVSQNKILLQRIEDSDLAHKLEKEQLEYIIVELQDQLKSYQSLDQLSAEVSLSQASLDPSHSQEGDGKQDSLNFIGEGKEDTPSLLGLCGSLTSVASYKSLTSLKSNDCLASPTTELTSPGLTPS</sequence>
<evidence type="ECO:0000250" key="1"/>
<evidence type="ECO:0000255" key="2"/>
<evidence type="ECO:0000255" key="3">
    <source>
        <dbReference type="PROSITE-ProRule" id="PRU00178"/>
    </source>
</evidence>
<evidence type="ECO:0000256" key="4">
    <source>
        <dbReference type="SAM" id="MobiDB-lite"/>
    </source>
</evidence>
<evidence type="ECO:0000305" key="5"/>
<evidence type="ECO:0007744" key="6">
    <source>
    </source>
</evidence>
<evidence type="ECO:0007744" key="7">
    <source>
    </source>
</evidence>
<dbReference type="EMBL" id="BC057375">
    <property type="protein sequence ID" value="AAH57375.1"/>
    <property type="molecule type" value="mRNA"/>
</dbReference>
<dbReference type="EMBL" id="BC058808">
    <property type="protein sequence ID" value="AAH58808.1"/>
    <property type="molecule type" value="mRNA"/>
</dbReference>
<dbReference type="CCDS" id="CCDS19083.1"/>
<dbReference type="RefSeq" id="NP_941022.1">
    <property type="nucleotide sequence ID" value="NM_198620.1"/>
</dbReference>
<dbReference type="SMR" id="Q6PDC0"/>
<dbReference type="BioGRID" id="232463">
    <property type="interactions" value="1"/>
</dbReference>
<dbReference type="FunCoup" id="Q6PDC0">
    <property type="interactions" value="49"/>
</dbReference>
<dbReference type="STRING" id="10090.ENSMUSP00000111036"/>
<dbReference type="GlyGen" id="Q6PDC0">
    <property type="glycosylation" value="1 site, 1 N-linked glycan (1 site)"/>
</dbReference>
<dbReference type="iPTMnet" id="Q6PDC0"/>
<dbReference type="PhosphoSitePlus" id="Q6PDC0"/>
<dbReference type="PaxDb" id="10090-ENSMUSP00000040108"/>
<dbReference type="ProteomicsDB" id="256813"/>
<dbReference type="Antibodypedia" id="45244">
    <property type="antibodies" value="55 antibodies from 16 providers"/>
</dbReference>
<dbReference type="DNASU" id="242819"/>
<dbReference type="Ensembl" id="ENSMUST00000047485.15">
    <property type="protein sequence ID" value="ENSMUSP00000040108.9"/>
    <property type="gene ID" value="ENSMUSG00000040570.15"/>
</dbReference>
<dbReference type="GeneID" id="242819"/>
<dbReference type="KEGG" id="mmu:242819"/>
<dbReference type="UCSC" id="uc008wkk.1">
    <property type="organism name" value="mouse"/>
</dbReference>
<dbReference type="AGR" id="MGI:2685286"/>
<dbReference type="CTD" id="154661"/>
<dbReference type="MGI" id="MGI:2685286">
    <property type="gene designation" value="Rundc3b"/>
</dbReference>
<dbReference type="VEuPathDB" id="HostDB:ENSMUSG00000040570"/>
<dbReference type="eggNOG" id="KOG4381">
    <property type="taxonomic scope" value="Eukaryota"/>
</dbReference>
<dbReference type="GeneTree" id="ENSGT00940000159175"/>
<dbReference type="HOGENOM" id="CLU_045987_0_0_1"/>
<dbReference type="InParanoid" id="Q6PDC0"/>
<dbReference type="OrthoDB" id="10029904at2759"/>
<dbReference type="PhylomeDB" id="Q6PDC0"/>
<dbReference type="TreeFam" id="TF323904"/>
<dbReference type="BioGRID-ORCS" id="242819">
    <property type="hits" value="3 hits in 76 CRISPR screens"/>
</dbReference>
<dbReference type="PRO" id="PR:Q6PDC0"/>
<dbReference type="Proteomes" id="UP000000589">
    <property type="component" value="Chromosome 5"/>
</dbReference>
<dbReference type="RNAct" id="Q6PDC0">
    <property type="molecule type" value="protein"/>
</dbReference>
<dbReference type="Bgee" id="ENSMUSG00000040570">
    <property type="expression patterns" value="Expressed in trigeminal ganglion and 175 other cell types or tissues"/>
</dbReference>
<dbReference type="ExpressionAtlas" id="Q6PDC0">
    <property type="expression patterns" value="baseline and differential"/>
</dbReference>
<dbReference type="CDD" id="cd17700">
    <property type="entry name" value="RUN_RUNDC3B"/>
    <property type="match status" value="1"/>
</dbReference>
<dbReference type="Gene3D" id="1.20.58.900">
    <property type="match status" value="1"/>
</dbReference>
<dbReference type="InterPro" id="IPR004012">
    <property type="entry name" value="Run_dom"/>
</dbReference>
<dbReference type="InterPro" id="IPR037213">
    <property type="entry name" value="Run_dom_sf"/>
</dbReference>
<dbReference type="InterPro" id="IPR047339">
    <property type="entry name" value="RUN_RUNDC3B"/>
</dbReference>
<dbReference type="InterPro" id="IPR047340">
    <property type="entry name" value="RUNDC3A_B"/>
</dbReference>
<dbReference type="PANTHER" id="PTHR46251">
    <property type="entry name" value="RUN DOMAIN-CONTAINING 3 PROTEIN RUNDC3"/>
    <property type="match status" value="1"/>
</dbReference>
<dbReference type="PANTHER" id="PTHR46251:SF1">
    <property type="entry name" value="RUN DOMAIN-CONTAINING PROTEIN 3B"/>
    <property type="match status" value="1"/>
</dbReference>
<dbReference type="Pfam" id="PF02759">
    <property type="entry name" value="RUN"/>
    <property type="match status" value="1"/>
</dbReference>
<dbReference type="SMART" id="SM00593">
    <property type="entry name" value="RUN"/>
    <property type="match status" value="1"/>
</dbReference>
<dbReference type="SUPFAM" id="SSF140741">
    <property type="entry name" value="RUN domain-like"/>
    <property type="match status" value="1"/>
</dbReference>
<dbReference type="PROSITE" id="PS50826">
    <property type="entry name" value="RUN"/>
    <property type="match status" value="1"/>
</dbReference>
<feature type="chain" id="PRO_0000336051" description="RUN domain-containing protein 3B">
    <location>
        <begin position="1"/>
        <end position="408"/>
    </location>
</feature>
<feature type="domain" description="RUN" evidence="3">
    <location>
        <begin position="58"/>
        <end position="190"/>
    </location>
</feature>
<feature type="region of interest" description="Disordered" evidence="4">
    <location>
        <begin position="1"/>
        <end position="25"/>
    </location>
</feature>
<feature type="region of interest" description="Disordered" evidence="4">
    <location>
        <begin position="213"/>
        <end position="238"/>
    </location>
</feature>
<feature type="region of interest" description="Disordered" evidence="4">
    <location>
        <begin position="337"/>
        <end position="359"/>
    </location>
</feature>
<feature type="coiled-coil region" evidence="2">
    <location>
        <begin position="301"/>
        <end position="326"/>
    </location>
</feature>
<feature type="compositionally biased region" description="Gly residues" evidence="4">
    <location>
        <begin position="8"/>
        <end position="22"/>
    </location>
</feature>
<feature type="compositionally biased region" description="Polar residues" evidence="4">
    <location>
        <begin position="225"/>
        <end position="236"/>
    </location>
</feature>
<feature type="modified residue" description="Omega-N-methylarginine" evidence="7">
    <location>
        <position position="13"/>
    </location>
</feature>
<feature type="modified residue" description="Phosphoserine" evidence="6">
    <location>
        <position position="216"/>
    </location>
</feature>
<feature type="modified residue" description="Phosphoserine" evidence="6">
    <location>
        <position position="217"/>
    </location>
</feature>
<name>RUN3B_MOUSE</name>
<proteinExistence type="evidence at protein level"/>
<protein>
    <recommendedName>
        <fullName>RUN domain-containing protein 3B</fullName>
    </recommendedName>
</protein>
<accession>Q6PDC0</accession>
<accession>Q6PFX5</accession>